<sequence>MNSQDLKKRQEKIRNFSIIAHIDHGKSTLADRILEKTETVSSREMQAQLLDSMDLERERGITIKLNAIELNYTAKDGETYIFHLIDTPGHVDFTYEVSRSLAACEGAILVVDAAQGIEAQTLANVYLALDNDLEILPVINKIDLPAADPERVRHEVEDVIGLDASEAVLASAKAGIGIEEILEQIVEKVPAPTGDVDAPLQALIFDSVYDAYRGVILQVRIVNGIVKPGDKIQMMSNGKTFDVTEVGIFTPKAVGRDFLATGDVGYVAASIKTVADTRVGDTVTLANNPAKEALHGYKQMNPMVFAGIYPIESNKYNDLREALEKLQLNDASLQFEPETSQALGFGFRCGFLGLLHMDVIQERLEREFNIDLIMTAPSVVYHVHTTDEDMIEVSNPSEFPDPTRVAFIEEPYVKAQIMVPQEFVGAVMELSQRKRGDFVTMDYIDDNRVNVIYQIPLAEIVFDFFDKLKSSTRGYASFDYDMSEYRRSQLVKMDILLNGDKVDALSFIVHKEFAYERGKIIVEKLKKIIPRQQFEVPIQAAIGQKIVARSDIKALRKNVLAKCYGGDVSRKRKLLEKQKAGKKRMKAIGSVEVPQEAFLSVLSMDDDAKK</sequence>
<dbReference type="EC" id="3.6.5.n1" evidence="1"/>
<dbReference type="EMBL" id="CP000259">
    <property type="protein sequence ID" value="ABF32081.1"/>
    <property type="molecule type" value="Genomic_DNA"/>
</dbReference>
<dbReference type="RefSeq" id="WP_002989943.1">
    <property type="nucleotide sequence ID" value="NC_008021.1"/>
</dbReference>
<dbReference type="SMR" id="Q1JLY8"/>
<dbReference type="GeneID" id="69900931"/>
<dbReference type="KEGG" id="spk:MGAS9429_Spy0893"/>
<dbReference type="HOGENOM" id="CLU_009995_3_3_9"/>
<dbReference type="Proteomes" id="UP000002433">
    <property type="component" value="Chromosome"/>
</dbReference>
<dbReference type="GO" id="GO:0005886">
    <property type="term" value="C:plasma membrane"/>
    <property type="evidence" value="ECO:0007669"/>
    <property type="project" value="UniProtKB-SubCell"/>
</dbReference>
<dbReference type="GO" id="GO:0005525">
    <property type="term" value="F:GTP binding"/>
    <property type="evidence" value="ECO:0007669"/>
    <property type="project" value="UniProtKB-UniRule"/>
</dbReference>
<dbReference type="GO" id="GO:0003924">
    <property type="term" value="F:GTPase activity"/>
    <property type="evidence" value="ECO:0007669"/>
    <property type="project" value="UniProtKB-UniRule"/>
</dbReference>
<dbReference type="GO" id="GO:0043022">
    <property type="term" value="F:ribosome binding"/>
    <property type="evidence" value="ECO:0007669"/>
    <property type="project" value="UniProtKB-UniRule"/>
</dbReference>
<dbReference type="GO" id="GO:0003746">
    <property type="term" value="F:translation elongation factor activity"/>
    <property type="evidence" value="ECO:0007669"/>
    <property type="project" value="UniProtKB-UniRule"/>
</dbReference>
<dbReference type="GO" id="GO:0045727">
    <property type="term" value="P:positive regulation of translation"/>
    <property type="evidence" value="ECO:0007669"/>
    <property type="project" value="UniProtKB-UniRule"/>
</dbReference>
<dbReference type="CDD" id="cd03699">
    <property type="entry name" value="EF4_II"/>
    <property type="match status" value="1"/>
</dbReference>
<dbReference type="CDD" id="cd16260">
    <property type="entry name" value="EF4_III"/>
    <property type="match status" value="1"/>
</dbReference>
<dbReference type="CDD" id="cd01890">
    <property type="entry name" value="LepA"/>
    <property type="match status" value="1"/>
</dbReference>
<dbReference type="CDD" id="cd03709">
    <property type="entry name" value="lepA_C"/>
    <property type="match status" value="1"/>
</dbReference>
<dbReference type="FunFam" id="3.40.50.300:FF:000078">
    <property type="entry name" value="Elongation factor 4"/>
    <property type="match status" value="1"/>
</dbReference>
<dbReference type="FunFam" id="2.40.30.10:FF:000015">
    <property type="entry name" value="Translation factor GUF1, mitochondrial"/>
    <property type="match status" value="1"/>
</dbReference>
<dbReference type="FunFam" id="3.30.70.240:FF:000007">
    <property type="entry name" value="Translation factor GUF1, mitochondrial"/>
    <property type="match status" value="1"/>
</dbReference>
<dbReference type="FunFam" id="3.30.70.2570:FF:000001">
    <property type="entry name" value="Translation factor GUF1, mitochondrial"/>
    <property type="match status" value="1"/>
</dbReference>
<dbReference type="FunFam" id="3.30.70.870:FF:000004">
    <property type="entry name" value="Translation factor GUF1, mitochondrial"/>
    <property type="match status" value="1"/>
</dbReference>
<dbReference type="Gene3D" id="3.30.70.240">
    <property type="match status" value="1"/>
</dbReference>
<dbReference type="Gene3D" id="3.30.70.2570">
    <property type="entry name" value="Elongation factor 4, C-terminal domain"/>
    <property type="match status" value="1"/>
</dbReference>
<dbReference type="Gene3D" id="3.30.70.870">
    <property type="entry name" value="Elongation Factor G (Translational Gtpase), domain 3"/>
    <property type="match status" value="1"/>
</dbReference>
<dbReference type="Gene3D" id="3.40.50.300">
    <property type="entry name" value="P-loop containing nucleotide triphosphate hydrolases"/>
    <property type="match status" value="1"/>
</dbReference>
<dbReference type="Gene3D" id="2.40.30.10">
    <property type="entry name" value="Translation factors"/>
    <property type="match status" value="1"/>
</dbReference>
<dbReference type="HAMAP" id="MF_00071">
    <property type="entry name" value="LepA"/>
    <property type="match status" value="1"/>
</dbReference>
<dbReference type="InterPro" id="IPR006297">
    <property type="entry name" value="EF-4"/>
</dbReference>
<dbReference type="InterPro" id="IPR041095">
    <property type="entry name" value="EFG_II"/>
</dbReference>
<dbReference type="InterPro" id="IPR035647">
    <property type="entry name" value="EFG_III/V"/>
</dbReference>
<dbReference type="InterPro" id="IPR000640">
    <property type="entry name" value="EFG_V-like"/>
</dbReference>
<dbReference type="InterPro" id="IPR004161">
    <property type="entry name" value="EFTu-like_2"/>
</dbReference>
<dbReference type="InterPro" id="IPR031157">
    <property type="entry name" value="G_TR_CS"/>
</dbReference>
<dbReference type="InterPro" id="IPR038363">
    <property type="entry name" value="LepA_C_sf"/>
</dbReference>
<dbReference type="InterPro" id="IPR013842">
    <property type="entry name" value="LepA_CTD"/>
</dbReference>
<dbReference type="InterPro" id="IPR035654">
    <property type="entry name" value="LepA_IV"/>
</dbReference>
<dbReference type="InterPro" id="IPR027417">
    <property type="entry name" value="P-loop_NTPase"/>
</dbReference>
<dbReference type="InterPro" id="IPR005225">
    <property type="entry name" value="Small_GTP-bd"/>
</dbReference>
<dbReference type="InterPro" id="IPR000795">
    <property type="entry name" value="T_Tr_GTP-bd_dom"/>
</dbReference>
<dbReference type="InterPro" id="IPR009000">
    <property type="entry name" value="Transl_B-barrel_sf"/>
</dbReference>
<dbReference type="NCBIfam" id="TIGR01393">
    <property type="entry name" value="lepA"/>
    <property type="match status" value="1"/>
</dbReference>
<dbReference type="NCBIfam" id="TIGR00231">
    <property type="entry name" value="small_GTP"/>
    <property type="match status" value="1"/>
</dbReference>
<dbReference type="PANTHER" id="PTHR43512:SF4">
    <property type="entry name" value="TRANSLATION FACTOR GUF1 HOMOLOG, CHLOROPLASTIC"/>
    <property type="match status" value="1"/>
</dbReference>
<dbReference type="PANTHER" id="PTHR43512">
    <property type="entry name" value="TRANSLATION FACTOR GUF1-RELATED"/>
    <property type="match status" value="1"/>
</dbReference>
<dbReference type="Pfam" id="PF00679">
    <property type="entry name" value="EFG_C"/>
    <property type="match status" value="1"/>
</dbReference>
<dbReference type="Pfam" id="PF14492">
    <property type="entry name" value="EFG_III"/>
    <property type="match status" value="1"/>
</dbReference>
<dbReference type="Pfam" id="PF00009">
    <property type="entry name" value="GTP_EFTU"/>
    <property type="match status" value="1"/>
</dbReference>
<dbReference type="Pfam" id="PF03144">
    <property type="entry name" value="GTP_EFTU_D2"/>
    <property type="match status" value="1"/>
</dbReference>
<dbReference type="Pfam" id="PF06421">
    <property type="entry name" value="LepA_C"/>
    <property type="match status" value="1"/>
</dbReference>
<dbReference type="PRINTS" id="PR00315">
    <property type="entry name" value="ELONGATNFCT"/>
</dbReference>
<dbReference type="SMART" id="SM00838">
    <property type="entry name" value="EFG_C"/>
    <property type="match status" value="1"/>
</dbReference>
<dbReference type="SUPFAM" id="SSF54980">
    <property type="entry name" value="EF-G C-terminal domain-like"/>
    <property type="match status" value="2"/>
</dbReference>
<dbReference type="SUPFAM" id="SSF52540">
    <property type="entry name" value="P-loop containing nucleoside triphosphate hydrolases"/>
    <property type="match status" value="1"/>
</dbReference>
<dbReference type="SUPFAM" id="SSF50447">
    <property type="entry name" value="Translation proteins"/>
    <property type="match status" value="1"/>
</dbReference>
<dbReference type="PROSITE" id="PS00301">
    <property type="entry name" value="G_TR_1"/>
    <property type="match status" value="1"/>
</dbReference>
<dbReference type="PROSITE" id="PS51722">
    <property type="entry name" value="G_TR_2"/>
    <property type="match status" value="1"/>
</dbReference>
<protein>
    <recommendedName>
        <fullName evidence="1">Elongation factor 4</fullName>
        <shortName evidence="1">EF-4</shortName>
        <ecNumber evidence="1">3.6.5.n1</ecNumber>
    </recommendedName>
    <alternativeName>
        <fullName evidence="1">Ribosomal back-translocase LepA</fullName>
    </alternativeName>
</protein>
<proteinExistence type="inferred from homology"/>
<name>LEPA_STRPC</name>
<feature type="chain" id="PRO_0000265711" description="Elongation factor 4">
    <location>
        <begin position="1"/>
        <end position="610"/>
    </location>
</feature>
<feature type="domain" description="tr-type G">
    <location>
        <begin position="11"/>
        <end position="193"/>
    </location>
</feature>
<feature type="binding site" evidence="1">
    <location>
        <begin position="23"/>
        <end position="28"/>
    </location>
    <ligand>
        <name>GTP</name>
        <dbReference type="ChEBI" id="CHEBI:37565"/>
    </ligand>
</feature>
<feature type="binding site" evidence="1">
    <location>
        <begin position="140"/>
        <end position="143"/>
    </location>
    <ligand>
        <name>GTP</name>
        <dbReference type="ChEBI" id="CHEBI:37565"/>
    </ligand>
</feature>
<organism>
    <name type="scientific">Streptococcus pyogenes serotype M12 (strain MGAS9429)</name>
    <dbReference type="NCBI Taxonomy" id="370551"/>
    <lineage>
        <taxon>Bacteria</taxon>
        <taxon>Bacillati</taxon>
        <taxon>Bacillota</taxon>
        <taxon>Bacilli</taxon>
        <taxon>Lactobacillales</taxon>
        <taxon>Streptococcaceae</taxon>
        <taxon>Streptococcus</taxon>
    </lineage>
</organism>
<accession>Q1JLY8</accession>
<comment type="function">
    <text evidence="1">Required for accurate and efficient protein synthesis under certain stress conditions. May act as a fidelity factor of the translation reaction, by catalyzing a one-codon backward translocation of tRNAs on improperly translocated ribosomes. Back-translocation proceeds from a post-translocation (POST) complex to a pre-translocation (PRE) complex, thus giving elongation factor G a second chance to translocate the tRNAs correctly. Binds to ribosomes in a GTP-dependent manner.</text>
</comment>
<comment type="catalytic activity">
    <reaction evidence="1">
        <text>GTP + H2O = GDP + phosphate + H(+)</text>
        <dbReference type="Rhea" id="RHEA:19669"/>
        <dbReference type="ChEBI" id="CHEBI:15377"/>
        <dbReference type="ChEBI" id="CHEBI:15378"/>
        <dbReference type="ChEBI" id="CHEBI:37565"/>
        <dbReference type="ChEBI" id="CHEBI:43474"/>
        <dbReference type="ChEBI" id="CHEBI:58189"/>
        <dbReference type="EC" id="3.6.5.n1"/>
    </reaction>
</comment>
<comment type="subcellular location">
    <subcellularLocation>
        <location evidence="1">Cell membrane</location>
        <topology evidence="1">Peripheral membrane protein</topology>
        <orientation evidence="1">Cytoplasmic side</orientation>
    </subcellularLocation>
</comment>
<comment type="similarity">
    <text evidence="1">Belongs to the TRAFAC class translation factor GTPase superfamily. Classic translation factor GTPase family. LepA subfamily.</text>
</comment>
<reference key="1">
    <citation type="journal article" date="2006" name="Proc. Natl. Acad. Sci. U.S.A.">
        <title>Molecular genetic anatomy of inter- and intraserotype variation in the human bacterial pathogen group A Streptococcus.</title>
        <authorList>
            <person name="Beres S.B."/>
            <person name="Richter E.W."/>
            <person name="Nagiec M.J."/>
            <person name="Sumby P."/>
            <person name="Porcella S.F."/>
            <person name="DeLeo F.R."/>
            <person name="Musser J.M."/>
        </authorList>
    </citation>
    <scope>NUCLEOTIDE SEQUENCE [LARGE SCALE GENOMIC DNA]</scope>
    <source>
        <strain>MGAS9429</strain>
    </source>
</reference>
<gene>
    <name evidence="1" type="primary">lepA</name>
    <name type="ordered locus">MGAS9429_Spy0893</name>
</gene>
<evidence type="ECO:0000255" key="1">
    <source>
        <dbReference type="HAMAP-Rule" id="MF_00071"/>
    </source>
</evidence>
<keyword id="KW-1003">Cell membrane</keyword>
<keyword id="KW-0342">GTP-binding</keyword>
<keyword id="KW-0378">Hydrolase</keyword>
<keyword id="KW-0472">Membrane</keyword>
<keyword id="KW-0547">Nucleotide-binding</keyword>
<keyword id="KW-0648">Protein biosynthesis</keyword>